<name>GATB_LAWIP</name>
<reference key="1">
    <citation type="submission" date="2005-11" db="EMBL/GenBank/DDBJ databases">
        <title>The complete genome sequence of Lawsonia intracellularis: the causative agent of proliferative enteropathy.</title>
        <authorList>
            <person name="Kaur K."/>
            <person name="Zhang Q."/>
            <person name="Beckler D."/>
            <person name="Munir S."/>
            <person name="Li L."/>
            <person name="Kinsley K."/>
            <person name="Herron L."/>
            <person name="Peterson A."/>
            <person name="May B."/>
            <person name="Singh S."/>
            <person name="Gebhart C."/>
            <person name="Kapur V."/>
        </authorList>
    </citation>
    <scope>NUCLEOTIDE SEQUENCE [LARGE SCALE GENOMIC DNA]</scope>
    <source>
        <strain>PHE/MN1-00</strain>
    </source>
</reference>
<accession>Q1MPL6</accession>
<keyword id="KW-0067">ATP-binding</keyword>
<keyword id="KW-0436">Ligase</keyword>
<keyword id="KW-0547">Nucleotide-binding</keyword>
<keyword id="KW-0648">Protein biosynthesis</keyword>
<keyword id="KW-1185">Reference proteome</keyword>
<evidence type="ECO:0000255" key="1">
    <source>
        <dbReference type="HAMAP-Rule" id="MF_00121"/>
    </source>
</evidence>
<feature type="chain" id="PRO_1000015984" description="Aspartyl/glutamyl-tRNA(Asn/Gln) amidotransferase subunit B">
    <location>
        <begin position="1"/>
        <end position="477"/>
    </location>
</feature>
<organism>
    <name type="scientific">Lawsonia intracellularis (strain PHE/MN1-00)</name>
    <dbReference type="NCBI Taxonomy" id="363253"/>
    <lineage>
        <taxon>Bacteria</taxon>
        <taxon>Pseudomonadati</taxon>
        <taxon>Thermodesulfobacteriota</taxon>
        <taxon>Desulfovibrionia</taxon>
        <taxon>Desulfovibrionales</taxon>
        <taxon>Desulfovibrionaceae</taxon>
        <taxon>Lawsonia</taxon>
    </lineage>
</organism>
<protein>
    <recommendedName>
        <fullName evidence="1">Aspartyl/glutamyl-tRNA(Asn/Gln) amidotransferase subunit B</fullName>
        <shortName evidence="1">Asp/Glu-ADT subunit B</shortName>
        <ecNumber evidence="1">6.3.5.-</ecNumber>
    </recommendedName>
</protein>
<proteinExistence type="inferred from homology"/>
<gene>
    <name evidence="1" type="primary">gatB</name>
    <name type="ordered locus">LI1007</name>
</gene>
<dbReference type="EC" id="6.3.5.-" evidence="1"/>
<dbReference type="EMBL" id="AM180252">
    <property type="protein sequence ID" value="CAJ55061.1"/>
    <property type="molecule type" value="Genomic_DNA"/>
</dbReference>
<dbReference type="RefSeq" id="WP_011527090.1">
    <property type="nucleotide sequence ID" value="NC_008011.1"/>
</dbReference>
<dbReference type="SMR" id="Q1MPL6"/>
<dbReference type="STRING" id="363253.LI1007"/>
<dbReference type="KEGG" id="lip:LI1007"/>
<dbReference type="eggNOG" id="COG0064">
    <property type="taxonomic scope" value="Bacteria"/>
</dbReference>
<dbReference type="HOGENOM" id="CLU_019240_0_0_7"/>
<dbReference type="OrthoDB" id="9804078at2"/>
<dbReference type="Proteomes" id="UP000002430">
    <property type="component" value="Chromosome"/>
</dbReference>
<dbReference type="GO" id="GO:0050566">
    <property type="term" value="F:asparaginyl-tRNA synthase (glutamine-hydrolyzing) activity"/>
    <property type="evidence" value="ECO:0007669"/>
    <property type="project" value="RHEA"/>
</dbReference>
<dbReference type="GO" id="GO:0005524">
    <property type="term" value="F:ATP binding"/>
    <property type="evidence" value="ECO:0007669"/>
    <property type="project" value="UniProtKB-KW"/>
</dbReference>
<dbReference type="GO" id="GO:0050567">
    <property type="term" value="F:glutaminyl-tRNA synthase (glutamine-hydrolyzing) activity"/>
    <property type="evidence" value="ECO:0007669"/>
    <property type="project" value="UniProtKB-UniRule"/>
</dbReference>
<dbReference type="GO" id="GO:0070681">
    <property type="term" value="P:glutaminyl-tRNAGln biosynthesis via transamidation"/>
    <property type="evidence" value="ECO:0007669"/>
    <property type="project" value="TreeGrafter"/>
</dbReference>
<dbReference type="GO" id="GO:0006412">
    <property type="term" value="P:translation"/>
    <property type="evidence" value="ECO:0007669"/>
    <property type="project" value="UniProtKB-UniRule"/>
</dbReference>
<dbReference type="FunFam" id="1.10.10.410:FF:000001">
    <property type="entry name" value="Aspartyl/glutamyl-tRNA(Asn/Gln) amidotransferase subunit B"/>
    <property type="match status" value="1"/>
</dbReference>
<dbReference type="Gene3D" id="1.10.10.410">
    <property type="match status" value="1"/>
</dbReference>
<dbReference type="Gene3D" id="1.10.150.380">
    <property type="entry name" value="GatB domain, N-terminal subdomain"/>
    <property type="match status" value="1"/>
</dbReference>
<dbReference type="HAMAP" id="MF_00121">
    <property type="entry name" value="GatB"/>
    <property type="match status" value="1"/>
</dbReference>
<dbReference type="InterPro" id="IPR017959">
    <property type="entry name" value="Asn/Gln-tRNA_amidoTrfase_suB/E"/>
</dbReference>
<dbReference type="InterPro" id="IPR006075">
    <property type="entry name" value="Asn/Gln-tRNA_Trfase_suB/E_cat"/>
</dbReference>
<dbReference type="InterPro" id="IPR018027">
    <property type="entry name" value="Asn/Gln_amidotransferase"/>
</dbReference>
<dbReference type="InterPro" id="IPR003789">
    <property type="entry name" value="Asn/Gln_tRNA_amidoTrase-B-like"/>
</dbReference>
<dbReference type="InterPro" id="IPR004413">
    <property type="entry name" value="GatB"/>
</dbReference>
<dbReference type="InterPro" id="IPR042114">
    <property type="entry name" value="GatB_C_1"/>
</dbReference>
<dbReference type="InterPro" id="IPR023168">
    <property type="entry name" value="GatB_Yqey_C_2"/>
</dbReference>
<dbReference type="InterPro" id="IPR017958">
    <property type="entry name" value="Gln-tRNA_amidoTrfase_suB_CS"/>
</dbReference>
<dbReference type="InterPro" id="IPR014746">
    <property type="entry name" value="Gln_synth/guanido_kin_cat_dom"/>
</dbReference>
<dbReference type="NCBIfam" id="TIGR00133">
    <property type="entry name" value="gatB"/>
    <property type="match status" value="1"/>
</dbReference>
<dbReference type="NCBIfam" id="NF004012">
    <property type="entry name" value="PRK05477.1-2"/>
    <property type="match status" value="1"/>
</dbReference>
<dbReference type="NCBIfam" id="NF004014">
    <property type="entry name" value="PRK05477.1-4"/>
    <property type="match status" value="1"/>
</dbReference>
<dbReference type="PANTHER" id="PTHR11659">
    <property type="entry name" value="GLUTAMYL-TRNA GLN AMIDOTRANSFERASE SUBUNIT B MITOCHONDRIAL AND PROKARYOTIC PET112-RELATED"/>
    <property type="match status" value="1"/>
</dbReference>
<dbReference type="PANTHER" id="PTHR11659:SF0">
    <property type="entry name" value="GLUTAMYL-TRNA(GLN) AMIDOTRANSFERASE SUBUNIT B, MITOCHONDRIAL"/>
    <property type="match status" value="1"/>
</dbReference>
<dbReference type="Pfam" id="PF02934">
    <property type="entry name" value="GatB_N"/>
    <property type="match status" value="1"/>
</dbReference>
<dbReference type="Pfam" id="PF02637">
    <property type="entry name" value="GatB_Yqey"/>
    <property type="match status" value="1"/>
</dbReference>
<dbReference type="SMART" id="SM00845">
    <property type="entry name" value="GatB_Yqey"/>
    <property type="match status" value="1"/>
</dbReference>
<dbReference type="SUPFAM" id="SSF89095">
    <property type="entry name" value="GatB/YqeY motif"/>
    <property type="match status" value="1"/>
</dbReference>
<dbReference type="SUPFAM" id="SSF55931">
    <property type="entry name" value="Glutamine synthetase/guanido kinase"/>
    <property type="match status" value="1"/>
</dbReference>
<dbReference type="PROSITE" id="PS01234">
    <property type="entry name" value="GATB"/>
    <property type="match status" value="1"/>
</dbReference>
<comment type="function">
    <text evidence="1">Allows the formation of correctly charged Asn-tRNA(Asn) or Gln-tRNA(Gln) through the transamidation of misacylated Asp-tRNA(Asn) or Glu-tRNA(Gln) in organisms which lack either or both of asparaginyl-tRNA or glutaminyl-tRNA synthetases. The reaction takes place in the presence of glutamine and ATP through an activated phospho-Asp-tRNA(Asn) or phospho-Glu-tRNA(Gln).</text>
</comment>
<comment type="catalytic activity">
    <reaction evidence="1">
        <text>L-glutamyl-tRNA(Gln) + L-glutamine + ATP + H2O = L-glutaminyl-tRNA(Gln) + L-glutamate + ADP + phosphate + H(+)</text>
        <dbReference type="Rhea" id="RHEA:17521"/>
        <dbReference type="Rhea" id="RHEA-COMP:9681"/>
        <dbReference type="Rhea" id="RHEA-COMP:9684"/>
        <dbReference type="ChEBI" id="CHEBI:15377"/>
        <dbReference type="ChEBI" id="CHEBI:15378"/>
        <dbReference type="ChEBI" id="CHEBI:29985"/>
        <dbReference type="ChEBI" id="CHEBI:30616"/>
        <dbReference type="ChEBI" id="CHEBI:43474"/>
        <dbReference type="ChEBI" id="CHEBI:58359"/>
        <dbReference type="ChEBI" id="CHEBI:78520"/>
        <dbReference type="ChEBI" id="CHEBI:78521"/>
        <dbReference type="ChEBI" id="CHEBI:456216"/>
    </reaction>
</comment>
<comment type="catalytic activity">
    <reaction evidence="1">
        <text>L-aspartyl-tRNA(Asn) + L-glutamine + ATP + H2O = L-asparaginyl-tRNA(Asn) + L-glutamate + ADP + phosphate + 2 H(+)</text>
        <dbReference type="Rhea" id="RHEA:14513"/>
        <dbReference type="Rhea" id="RHEA-COMP:9674"/>
        <dbReference type="Rhea" id="RHEA-COMP:9677"/>
        <dbReference type="ChEBI" id="CHEBI:15377"/>
        <dbReference type="ChEBI" id="CHEBI:15378"/>
        <dbReference type="ChEBI" id="CHEBI:29985"/>
        <dbReference type="ChEBI" id="CHEBI:30616"/>
        <dbReference type="ChEBI" id="CHEBI:43474"/>
        <dbReference type="ChEBI" id="CHEBI:58359"/>
        <dbReference type="ChEBI" id="CHEBI:78515"/>
        <dbReference type="ChEBI" id="CHEBI:78516"/>
        <dbReference type="ChEBI" id="CHEBI:456216"/>
    </reaction>
</comment>
<comment type="subunit">
    <text evidence="1">Heterotrimer of A, B and C subunits.</text>
</comment>
<comment type="similarity">
    <text evidence="1">Belongs to the GatB/GatE family. GatB subfamily.</text>
</comment>
<sequence>MSHFEAVIGLEVHVQLGTKSKLFCSCPTTFGTPPNTNICEICAGMPGALPSLNKLAVEYAVKAGLALHCTINTHSFFSRKNYFYPDLPNGYQISQGTHALCTSGYLDLTIKNNNKRIGIHQIHLENDAGKSIHSPHENKSFIDLNRAGVPLIEIVSKPDINTPSEAVAYLKSLHAIVTYLGISDGNMEEGNFRCDANISLRPYNSKHLGTRTEIKNLNSFRNVQRALEFEINRQQDILEDGKTIIQETRLYNSDKDITTPMRDKETAHDYRYFPDPDLVPIYVTIQEIEKWKGEIPELSDSRQKRFVIEWGLAHQDAEILTSSRELADFFEKAVKLYPKPKKIANLIKILLLHMLNEHNITIQQCTMKPEAIAELAAIIDENLISIKIAHDIFEDLFSKQLMPKDYVIKHGLTQISDTKTIDTIVVEVLAENPTEVAAYKNGKTKLLSFFIGQVMKKMQGQANPALVNQALHNILSK</sequence>